<organism>
    <name type="scientific">Aspergillus oryzae (strain ATCC 42149 / RIB 40)</name>
    <name type="common">Yellow koji mold</name>
    <dbReference type="NCBI Taxonomy" id="510516"/>
    <lineage>
        <taxon>Eukaryota</taxon>
        <taxon>Fungi</taxon>
        <taxon>Dikarya</taxon>
        <taxon>Ascomycota</taxon>
        <taxon>Pezizomycotina</taxon>
        <taxon>Eurotiomycetes</taxon>
        <taxon>Eurotiomycetidae</taxon>
        <taxon>Eurotiales</taxon>
        <taxon>Aspergillaceae</taxon>
        <taxon>Aspergillus</taxon>
        <taxon>Aspergillus subgen. Circumdati</taxon>
    </lineage>
</organism>
<accession>Q2UCH0</accession>
<protein>
    <recommendedName>
        <fullName>Actin cytoskeleton-regulatory complex protein end3</fullName>
    </recommendedName>
    <alternativeName>
        <fullName>Cytoskeletal adapter protein sagA</fullName>
    </alternativeName>
    <alternativeName>
        <fullName>Endocytosis protein 3</fullName>
    </alternativeName>
</protein>
<sequence>MSNKKIEQWEIERYWEIFASLANGQPRLNNSQAASVLRNSRLRDEQLEKVWDLADVDGDGELDFEEFCVAMRLVFDLVNGELQTVPAVLPDWLVPESKSHLVHATRALSTQPEQFERIEDEDDTPGLKDGFEWYMKPADKSKYEEIYNANRNQRGEIAFESLQPLYDSLDVPDTDVRSAWNLVNPSASHTINKDATLAFLHILNYRHEGFRIPRTVPASLRASFENNKIDYQVDNARPAQKWGADGDTETPTGRKTKFGDTYLSRLGAGGKSSYTPKGTNFSDTIQDEEWEKVRLRRELAELETKLNSAQQASEGRRDQPRNDGRTSWGLVKKEALQLLEYKERELRELREGTGRSKEGQNLERLREDVKAVGEQVDGLKSHLANRNEVLADLRRQIDEEKVSR</sequence>
<feature type="chain" id="PRO_0000349440" description="Actin cytoskeleton-regulatory complex protein end3">
    <location>
        <begin position="1"/>
        <end position="404"/>
    </location>
</feature>
<feature type="domain" description="EH 1" evidence="3">
    <location>
        <begin position="10"/>
        <end position="100"/>
    </location>
</feature>
<feature type="domain" description="EF-hand" evidence="4">
    <location>
        <begin position="42"/>
        <end position="77"/>
    </location>
</feature>
<feature type="domain" description="EH 2" evidence="3">
    <location>
        <begin position="139"/>
        <end position="227"/>
    </location>
</feature>
<feature type="region of interest" description="Disordered" evidence="5">
    <location>
        <begin position="304"/>
        <end position="328"/>
    </location>
</feature>
<feature type="coiled-coil region" evidence="2">
    <location>
        <begin position="280"/>
        <end position="401"/>
    </location>
</feature>
<feature type="compositionally biased region" description="Basic and acidic residues" evidence="5">
    <location>
        <begin position="314"/>
        <end position="324"/>
    </location>
</feature>
<feature type="binding site" evidence="4">
    <location>
        <position position="55"/>
    </location>
    <ligand>
        <name>Ca(2+)</name>
        <dbReference type="ChEBI" id="CHEBI:29108"/>
    </ligand>
</feature>
<feature type="binding site" evidence="4">
    <location>
        <position position="57"/>
    </location>
    <ligand>
        <name>Ca(2+)</name>
        <dbReference type="ChEBI" id="CHEBI:29108"/>
    </ligand>
</feature>
<feature type="binding site" evidence="4">
    <location>
        <position position="59"/>
    </location>
    <ligand>
        <name>Ca(2+)</name>
        <dbReference type="ChEBI" id="CHEBI:29108"/>
    </ligand>
</feature>
<feature type="binding site" evidence="4">
    <location>
        <position position="61"/>
    </location>
    <ligand>
        <name>Ca(2+)</name>
        <dbReference type="ChEBI" id="CHEBI:29108"/>
    </ligand>
</feature>
<feature type="binding site" evidence="4">
    <location>
        <position position="66"/>
    </location>
    <ligand>
        <name>Ca(2+)</name>
        <dbReference type="ChEBI" id="CHEBI:29108"/>
    </ligand>
</feature>
<reference key="1">
    <citation type="journal article" date="2005" name="Nature">
        <title>Genome sequencing and analysis of Aspergillus oryzae.</title>
        <authorList>
            <person name="Machida M."/>
            <person name="Asai K."/>
            <person name="Sano M."/>
            <person name="Tanaka T."/>
            <person name="Kumagai T."/>
            <person name="Terai G."/>
            <person name="Kusumoto K."/>
            <person name="Arima T."/>
            <person name="Akita O."/>
            <person name="Kashiwagi Y."/>
            <person name="Abe K."/>
            <person name="Gomi K."/>
            <person name="Horiuchi H."/>
            <person name="Kitamoto K."/>
            <person name="Kobayashi T."/>
            <person name="Takeuchi M."/>
            <person name="Denning D.W."/>
            <person name="Galagan J.E."/>
            <person name="Nierman W.C."/>
            <person name="Yu J."/>
            <person name="Archer D.B."/>
            <person name="Bennett J.W."/>
            <person name="Bhatnagar D."/>
            <person name="Cleveland T.E."/>
            <person name="Fedorova N.D."/>
            <person name="Gotoh O."/>
            <person name="Horikawa H."/>
            <person name="Hosoyama A."/>
            <person name="Ichinomiya M."/>
            <person name="Igarashi R."/>
            <person name="Iwashita K."/>
            <person name="Juvvadi P.R."/>
            <person name="Kato M."/>
            <person name="Kato Y."/>
            <person name="Kin T."/>
            <person name="Kokubun A."/>
            <person name="Maeda H."/>
            <person name="Maeyama N."/>
            <person name="Maruyama J."/>
            <person name="Nagasaki H."/>
            <person name="Nakajima T."/>
            <person name="Oda K."/>
            <person name="Okada K."/>
            <person name="Paulsen I."/>
            <person name="Sakamoto K."/>
            <person name="Sawano T."/>
            <person name="Takahashi M."/>
            <person name="Takase K."/>
            <person name="Terabayashi Y."/>
            <person name="Wortman J.R."/>
            <person name="Yamada O."/>
            <person name="Yamagata Y."/>
            <person name="Anazawa H."/>
            <person name="Hata Y."/>
            <person name="Koide Y."/>
            <person name="Komori T."/>
            <person name="Koyama Y."/>
            <person name="Minetoki T."/>
            <person name="Suharnan S."/>
            <person name="Tanaka A."/>
            <person name="Isono K."/>
            <person name="Kuhara S."/>
            <person name="Ogasawara N."/>
            <person name="Kikuchi H."/>
        </authorList>
    </citation>
    <scope>NUCLEOTIDE SEQUENCE [LARGE SCALE GENOMIC DNA]</scope>
    <source>
        <strain>ATCC 42149 / RIB 40</strain>
    </source>
</reference>
<gene>
    <name type="primary">end3</name>
    <name type="synonym">sagA</name>
    <name type="ORF">AO090012000592</name>
</gene>
<keyword id="KW-0009">Actin-binding</keyword>
<keyword id="KW-0106">Calcium</keyword>
<keyword id="KW-1003">Cell membrane</keyword>
<keyword id="KW-0175">Coiled coil</keyword>
<keyword id="KW-0963">Cytoplasm</keyword>
<keyword id="KW-0206">Cytoskeleton</keyword>
<keyword id="KW-0254">Endocytosis</keyword>
<keyword id="KW-0967">Endosome</keyword>
<keyword id="KW-0472">Membrane</keyword>
<keyword id="KW-0479">Metal-binding</keyword>
<keyword id="KW-1185">Reference proteome</keyword>
<keyword id="KW-0677">Repeat</keyword>
<comment type="function">
    <text evidence="1">Component of the PAN1 actin cytoskeleton-regulatory complex required for the internalization of endosomes during actin-coupled endocytosis. The complex links the site of endocytosis to the cell membrane-associated actin cytoskeleton. Mediates uptake of external molecules and vacuolar degradation of plasma membrane proteins. Plays a role in the proper organization of the cell membrane-associated actin cytoskeleton and promotes its destabilization (By similarity).</text>
</comment>
<comment type="subunit">
    <text evidence="1">Component of the PAN1 actin cytoskeleton-regulatory complex.</text>
</comment>
<comment type="subcellular location">
    <subcellularLocation>
        <location evidence="1">Cell membrane</location>
        <topology evidence="1">Peripheral membrane protein</topology>
        <orientation evidence="1">Cytoplasmic side</orientation>
    </subcellularLocation>
    <subcellularLocation>
        <location evidence="1">Endosome membrane</location>
        <topology evidence="1">Peripheral membrane protein</topology>
        <orientation evidence="1">Cytoplasmic side</orientation>
    </subcellularLocation>
    <subcellularLocation>
        <location evidence="1">Cytoplasm</location>
        <location evidence="1">Cytoskeleton</location>
        <location evidence="1">Actin patch</location>
    </subcellularLocation>
    <text evidence="1">Cytoplasmic and cortical actin patches.</text>
</comment>
<comment type="similarity">
    <text evidence="6">Belongs to the END3 family.</text>
</comment>
<evidence type="ECO:0000250" key="1"/>
<evidence type="ECO:0000255" key="2"/>
<evidence type="ECO:0000255" key="3">
    <source>
        <dbReference type="PROSITE-ProRule" id="PRU00077"/>
    </source>
</evidence>
<evidence type="ECO:0000255" key="4">
    <source>
        <dbReference type="PROSITE-ProRule" id="PRU00448"/>
    </source>
</evidence>
<evidence type="ECO:0000256" key="5">
    <source>
        <dbReference type="SAM" id="MobiDB-lite"/>
    </source>
</evidence>
<evidence type="ECO:0000305" key="6"/>
<proteinExistence type="inferred from homology"/>
<dbReference type="EMBL" id="BA000052">
    <property type="protein sequence ID" value="BAE60745.1"/>
    <property type="molecule type" value="Genomic_DNA"/>
</dbReference>
<dbReference type="RefSeq" id="XP_001727584.1">
    <property type="nucleotide sequence ID" value="XM_001727532.2"/>
</dbReference>
<dbReference type="STRING" id="510516.Q2UCH0"/>
<dbReference type="EnsemblFungi" id="BAE60745">
    <property type="protein sequence ID" value="BAE60745"/>
    <property type="gene ID" value="AO090012000592"/>
</dbReference>
<dbReference type="GeneID" id="5988058"/>
<dbReference type="KEGG" id="aor:AO090012000592"/>
<dbReference type="VEuPathDB" id="FungiDB:AO090012000592"/>
<dbReference type="HOGENOM" id="CLU_040829_0_0_1"/>
<dbReference type="OMA" id="DWLIPES"/>
<dbReference type="OrthoDB" id="55224at5052"/>
<dbReference type="Proteomes" id="UP000006564">
    <property type="component" value="Chromosome 4"/>
</dbReference>
<dbReference type="GO" id="GO:0030479">
    <property type="term" value="C:actin cortical patch"/>
    <property type="evidence" value="ECO:0007669"/>
    <property type="project" value="UniProtKB-SubCell"/>
</dbReference>
<dbReference type="GO" id="GO:0010008">
    <property type="term" value="C:endosome membrane"/>
    <property type="evidence" value="ECO:0007669"/>
    <property type="project" value="UniProtKB-SubCell"/>
</dbReference>
<dbReference type="GO" id="GO:0005886">
    <property type="term" value="C:plasma membrane"/>
    <property type="evidence" value="ECO:0007669"/>
    <property type="project" value="UniProtKB-SubCell"/>
</dbReference>
<dbReference type="GO" id="GO:0003779">
    <property type="term" value="F:actin binding"/>
    <property type="evidence" value="ECO:0007669"/>
    <property type="project" value="UniProtKB-KW"/>
</dbReference>
<dbReference type="GO" id="GO:0005509">
    <property type="term" value="F:calcium ion binding"/>
    <property type="evidence" value="ECO:0007669"/>
    <property type="project" value="InterPro"/>
</dbReference>
<dbReference type="GO" id="GO:0007015">
    <property type="term" value="P:actin filament organization"/>
    <property type="evidence" value="ECO:0007669"/>
    <property type="project" value="InterPro"/>
</dbReference>
<dbReference type="GO" id="GO:0006897">
    <property type="term" value="P:endocytosis"/>
    <property type="evidence" value="ECO:0007669"/>
    <property type="project" value="UniProtKB-KW"/>
</dbReference>
<dbReference type="GO" id="GO:0016197">
    <property type="term" value="P:endosomal transport"/>
    <property type="evidence" value="ECO:0007669"/>
    <property type="project" value="TreeGrafter"/>
</dbReference>
<dbReference type="CDD" id="cd00052">
    <property type="entry name" value="EH"/>
    <property type="match status" value="1"/>
</dbReference>
<dbReference type="FunFam" id="1.10.238.10:FF:000339">
    <property type="entry name" value="Actin cytoskeleton-regulatory complex protein END3"/>
    <property type="match status" value="1"/>
</dbReference>
<dbReference type="FunFam" id="1.10.238.10:FF:000323">
    <property type="entry name" value="Actin cytoskeleton-regulatory complex protein end3"/>
    <property type="match status" value="1"/>
</dbReference>
<dbReference type="Gene3D" id="1.10.238.10">
    <property type="entry name" value="EF-hand"/>
    <property type="match status" value="2"/>
</dbReference>
<dbReference type="InterPro" id="IPR011992">
    <property type="entry name" value="EF-hand-dom_pair"/>
</dbReference>
<dbReference type="InterPro" id="IPR018247">
    <property type="entry name" value="EF_Hand_1_Ca_BS"/>
</dbReference>
<dbReference type="InterPro" id="IPR002048">
    <property type="entry name" value="EF_hand_dom"/>
</dbReference>
<dbReference type="InterPro" id="IPR000261">
    <property type="entry name" value="EH_dom"/>
</dbReference>
<dbReference type="InterPro" id="IPR025604">
    <property type="entry name" value="End3"/>
</dbReference>
<dbReference type="PANTHER" id="PTHR11216">
    <property type="entry name" value="EH DOMAIN"/>
    <property type="match status" value="1"/>
</dbReference>
<dbReference type="Pfam" id="PF12763">
    <property type="entry name" value="EH"/>
    <property type="match status" value="1"/>
</dbReference>
<dbReference type="Pfam" id="PF12761">
    <property type="entry name" value="End3"/>
    <property type="match status" value="1"/>
</dbReference>
<dbReference type="SMART" id="SM00054">
    <property type="entry name" value="EFh"/>
    <property type="match status" value="1"/>
</dbReference>
<dbReference type="SMART" id="SM00027">
    <property type="entry name" value="EH"/>
    <property type="match status" value="2"/>
</dbReference>
<dbReference type="SUPFAM" id="SSF47473">
    <property type="entry name" value="EF-hand"/>
    <property type="match status" value="2"/>
</dbReference>
<dbReference type="PROSITE" id="PS00018">
    <property type="entry name" value="EF_HAND_1"/>
    <property type="match status" value="1"/>
</dbReference>
<dbReference type="PROSITE" id="PS50222">
    <property type="entry name" value="EF_HAND_2"/>
    <property type="match status" value="1"/>
</dbReference>
<dbReference type="PROSITE" id="PS50031">
    <property type="entry name" value="EH"/>
    <property type="match status" value="2"/>
</dbReference>
<name>END3_ASPOR</name>